<evidence type="ECO:0000255" key="1">
    <source>
        <dbReference type="HAMAP-Rule" id="MF_02083"/>
    </source>
</evidence>
<evidence type="ECO:0000305" key="2"/>
<organism>
    <name type="scientific">Deinococcus radiodurans (strain ATCC 13939 / DSM 20539 / JCM 16871 / CCUG 27074 / LMG 4051 / NBRC 15346 / NCIMB 9279 / VKM B-1422 / R1)</name>
    <dbReference type="NCBI Taxonomy" id="243230"/>
    <lineage>
        <taxon>Bacteria</taxon>
        <taxon>Thermotogati</taxon>
        <taxon>Deinococcota</taxon>
        <taxon>Deinococci</taxon>
        <taxon>Deinococcales</taxon>
        <taxon>Deinococcaceae</taxon>
        <taxon>Deinococcus</taxon>
    </lineage>
</organism>
<comment type="function">
    <text evidence="1">Catalyzes the NADPH-dependent reduction of [LysW]-aminoadipate 6-phosphate to yield [LysW]-aminoadipate 6-semialdehyde.</text>
</comment>
<comment type="catalytic activity">
    <reaction evidence="1">
        <text>[amino-group carrier protein]-C-terminal-N-(1-carboxy-5-oxopentan-1-yl)-L-glutamine + phosphate + NADP(+) = [amino-group carrier protein]-C-terminal-N-(1-carboxy-5-phosphooxy-5-oxopentan-1-yl)-L-glutamine + NADPH + H(+)</text>
        <dbReference type="Rhea" id="RHEA:41948"/>
        <dbReference type="Rhea" id="RHEA-COMP:9712"/>
        <dbReference type="Rhea" id="RHEA-COMP:9714"/>
        <dbReference type="ChEBI" id="CHEBI:15378"/>
        <dbReference type="ChEBI" id="CHEBI:43474"/>
        <dbReference type="ChEBI" id="CHEBI:57783"/>
        <dbReference type="ChEBI" id="CHEBI:58349"/>
        <dbReference type="ChEBI" id="CHEBI:78499"/>
        <dbReference type="ChEBI" id="CHEBI:78501"/>
        <dbReference type="EC" id="1.2.1.103"/>
    </reaction>
</comment>
<comment type="pathway">
    <text evidence="1">Amino-acid biosynthesis; L-lysine biosynthesis via AAA pathway; L-lysine from L-alpha-aminoadipate (Thermus route): step 3/5.</text>
</comment>
<comment type="subcellular location">
    <subcellularLocation>
        <location evidence="1">Cytoplasm</location>
    </subcellularLocation>
</comment>
<comment type="similarity">
    <text evidence="1">Belongs to the NAGSA dehydrogenase family. Type 1 subfamily. LysY sub-subfamily.</text>
</comment>
<comment type="sequence caution" evidence="2">
    <conflict type="erroneous initiation">
        <sequence resource="EMBL-CDS" id="AAF10536"/>
    </conflict>
</comment>
<reference key="1">
    <citation type="journal article" date="1999" name="Science">
        <title>Genome sequence of the radioresistant bacterium Deinococcus radiodurans R1.</title>
        <authorList>
            <person name="White O."/>
            <person name="Eisen J.A."/>
            <person name="Heidelberg J.F."/>
            <person name="Hickey E.K."/>
            <person name="Peterson J.D."/>
            <person name="Dodson R.J."/>
            <person name="Haft D.H."/>
            <person name="Gwinn M.L."/>
            <person name="Nelson W.C."/>
            <person name="Richardson D.L."/>
            <person name="Moffat K.S."/>
            <person name="Qin H."/>
            <person name="Jiang L."/>
            <person name="Pamphile W."/>
            <person name="Crosby M."/>
            <person name="Shen M."/>
            <person name="Vamathevan J.J."/>
            <person name="Lam P."/>
            <person name="McDonald L.A."/>
            <person name="Utterback T.R."/>
            <person name="Zalewski C."/>
            <person name="Makarova K.S."/>
            <person name="Aravind L."/>
            <person name="Daly M.J."/>
            <person name="Minton K.W."/>
            <person name="Fleischmann R.D."/>
            <person name="Ketchum K.A."/>
            <person name="Nelson K.E."/>
            <person name="Salzberg S.L."/>
            <person name="Smith H.O."/>
            <person name="Venter J.C."/>
            <person name="Fraser C.M."/>
        </authorList>
    </citation>
    <scope>NUCLEOTIDE SEQUENCE [LARGE SCALE GENOMIC DNA]</scope>
    <source>
        <strain>ATCC 13939 / DSM 20539 / JCM 16871 / CCUG 27074 / LMG 4051 / NBRC 15346 / NCIMB 9279 / VKM B-1422 / R1</strain>
    </source>
</reference>
<gene>
    <name evidence="1" type="primary">lysY</name>
    <name type="ordered locus">DR_0963</name>
</gene>
<sequence length="348" mass="37775">MSTEKKTVAIVGGSGYAGGEFLRLALGHPHLEVTQVTSERSAKLPVSMVHPNLRGATNLKFRKAAELEEADIIVLALPHNSAAKRITEFEAKGKVIVDLSADFRLKDPEVYERFYGEPHPAPEQLGQWVYGNPELHREDLRGATRIACAGCFATSVILALYPLLRLGALAPKDIIATGLVGSSAAGASASESSHHPERAGSLRVYKPVGHRHTAEAQQELPGKFPLHLTAISTPRVRGILTTIQAWVPDGWSDKDVWSAYREVYGQEPFIRIVKVAKGIHRYPDPMLLDGTNFCDIGFEMDVDTGRVVLMSAIDNLVKGTAGHAIQSLNVAQGWDERAGLGFLGLHPT</sequence>
<name>LYSY_DEIRA</name>
<protein>
    <recommendedName>
        <fullName evidence="1">[LysW]-L-2-aminoadipate 6-phosphate reductase</fullName>
        <ecNumber evidence="1">1.2.1.103</ecNumber>
    </recommendedName>
</protein>
<keyword id="KW-0028">Amino-acid biosynthesis</keyword>
<keyword id="KW-0963">Cytoplasm</keyword>
<keyword id="KW-0457">Lysine biosynthesis</keyword>
<keyword id="KW-0521">NADP</keyword>
<keyword id="KW-0560">Oxidoreductase</keyword>
<keyword id="KW-1185">Reference proteome</keyword>
<proteinExistence type="inferred from homology"/>
<accession>Q9RVQ9</accession>
<dbReference type="EC" id="1.2.1.103" evidence="1"/>
<dbReference type="EMBL" id="AE000513">
    <property type="protein sequence ID" value="AAF10536.1"/>
    <property type="status" value="ALT_INIT"/>
    <property type="molecule type" value="Genomic_DNA"/>
</dbReference>
<dbReference type="PIR" id="B75455">
    <property type="entry name" value="B75455"/>
</dbReference>
<dbReference type="RefSeq" id="NP_294687.2">
    <property type="nucleotide sequence ID" value="NC_001263.1"/>
</dbReference>
<dbReference type="RefSeq" id="WP_010887608.1">
    <property type="nucleotide sequence ID" value="NC_001263.1"/>
</dbReference>
<dbReference type="SMR" id="Q9RVQ9"/>
<dbReference type="FunCoup" id="Q9RVQ9">
    <property type="interactions" value="335"/>
</dbReference>
<dbReference type="STRING" id="243230.DR_0963"/>
<dbReference type="PaxDb" id="243230-DR_0963"/>
<dbReference type="EnsemblBacteria" id="AAF10536">
    <property type="protein sequence ID" value="AAF10536"/>
    <property type="gene ID" value="DR_0963"/>
</dbReference>
<dbReference type="GeneID" id="69517208"/>
<dbReference type="KEGG" id="dra:DR_0963"/>
<dbReference type="PATRIC" id="fig|243230.17.peg.1150"/>
<dbReference type="eggNOG" id="COG0002">
    <property type="taxonomic scope" value="Bacteria"/>
</dbReference>
<dbReference type="HOGENOM" id="CLU_006384_0_1_0"/>
<dbReference type="InParanoid" id="Q9RVQ9"/>
<dbReference type="OrthoDB" id="9801289at2"/>
<dbReference type="UniPathway" id="UPA00033">
    <property type="reaction ID" value="UER00037"/>
</dbReference>
<dbReference type="Proteomes" id="UP000002524">
    <property type="component" value="Chromosome 1"/>
</dbReference>
<dbReference type="GO" id="GO:0005737">
    <property type="term" value="C:cytoplasm"/>
    <property type="evidence" value="ECO:0007669"/>
    <property type="project" value="UniProtKB-SubCell"/>
</dbReference>
<dbReference type="GO" id="GO:0043870">
    <property type="term" value="F:N-acetyl-gamma-aminoadipyl-phosphate reductase activity"/>
    <property type="evidence" value="ECO:0007669"/>
    <property type="project" value="RHEA"/>
</dbReference>
<dbReference type="GO" id="GO:0003942">
    <property type="term" value="F:N-acetyl-gamma-glutamyl-phosphate reductase activity"/>
    <property type="evidence" value="ECO:0007669"/>
    <property type="project" value="InterPro"/>
</dbReference>
<dbReference type="GO" id="GO:0051287">
    <property type="term" value="F:NAD binding"/>
    <property type="evidence" value="ECO:0007669"/>
    <property type="project" value="InterPro"/>
</dbReference>
<dbReference type="GO" id="GO:0070401">
    <property type="term" value="F:NADP+ binding"/>
    <property type="evidence" value="ECO:0007669"/>
    <property type="project" value="InterPro"/>
</dbReference>
<dbReference type="GO" id="GO:0006526">
    <property type="term" value="P:L-arginine biosynthetic process"/>
    <property type="evidence" value="ECO:0007669"/>
    <property type="project" value="InterPro"/>
</dbReference>
<dbReference type="GO" id="GO:0019878">
    <property type="term" value="P:lysine biosynthetic process via aminoadipic acid"/>
    <property type="evidence" value="ECO:0007669"/>
    <property type="project" value="UniProtKB-UniRule"/>
</dbReference>
<dbReference type="CDD" id="cd23939">
    <property type="entry name" value="AGPR_1_C_LysY"/>
    <property type="match status" value="1"/>
</dbReference>
<dbReference type="CDD" id="cd24151">
    <property type="entry name" value="AGPR_1_N_LysY"/>
    <property type="match status" value="1"/>
</dbReference>
<dbReference type="Gene3D" id="3.30.360.10">
    <property type="entry name" value="Dihydrodipicolinate Reductase, domain 2"/>
    <property type="match status" value="1"/>
</dbReference>
<dbReference type="Gene3D" id="3.40.50.720">
    <property type="entry name" value="NAD(P)-binding Rossmann-like Domain"/>
    <property type="match status" value="1"/>
</dbReference>
<dbReference type="HAMAP" id="MF_00150">
    <property type="entry name" value="ArgC_type1"/>
    <property type="match status" value="1"/>
</dbReference>
<dbReference type="HAMAP" id="MF_02083">
    <property type="entry name" value="LysY"/>
    <property type="match status" value="1"/>
</dbReference>
<dbReference type="InterPro" id="IPR023013">
    <property type="entry name" value="AGPR_AS"/>
</dbReference>
<dbReference type="InterPro" id="IPR000706">
    <property type="entry name" value="AGPR_type-1"/>
</dbReference>
<dbReference type="InterPro" id="IPR037535">
    <property type="entry name" value="LysY"/>
</dbReference>
<dbReference type="InterPro" id="IPR036291">
    <property type="entry name" value="NAD(P)-bd_dom_sf"/>
</dbReference>
<dbReference type="InterPro" id="IPR050085">
    <property type="entry name" value="NAGSA_dehydrogenase"/>
</dbReference>
<dbReference type="InterPro" id="IPR000534">
    <property type="entry name" value="Semialdehyde_DH_NAD-bd"/>
</dbReference>
<dbReference type="NCBIfam" id="TIGR01850">
    <property type="entry name" value="argC"/>
    <property type="match status" value="1"/>
</dbReference>
<dbReference type="PANTHER" id="PTHR32338:SF11">
    <property type="entry name" value="[LYSW]-L-2-AMINOADIPATE_[LYSW]-L-GLUTAMATE PHOSPHATE REDUCTASE-RELATED"/>
    <property type="match status" value="1"/>
</dbReference>
<dbReference type="PANTHER" id="PTHR32338">
    <property type="entry name" value="N-ACETYL-GAMMA-GLUTAMYL-PHOSPHATE REDUCTASE, CHLOROPLASTIC-RELATED-RELATED"/>
    <property type="match status" value="1"/>
</dbReference>
<dbReference type="Pfam" id="PF01118">
    <property type="entry name" value="Semialdhyde_dh"/>
    <property type="match status" value="1"/>
</dbReference>
<dbReference type="Pfam" id="PF22698">
    <property type="entry name" value="Semialdhyde_dhC_1"/>
    <property type="match status" value="1"/>
</dbReference>
<dbReference type="SMART" id="SM00859">
    <property type="entry name" value="Semialdhyde_dh"/>
    <property type="match status" value="1"/>
</dbReference>
<dbReference type="SUPFAM" id="SSF55347">
    <property type="entry name" value="Glyceraldehyde-3-phosphate dehydrogenase-like, C-terminal domain"/>
    <property type="match status" value="1"/>
</dbReference>
<dbReference type="SUPFAM" id="SSF51735">
    <property type="entry name" value="NAD(P)-binding Rossmann-fold domains"/>
    <property type="match status" value="1"/>
</dbReference>
<dbReference type="PROSITE" id="PS01224">
    <property type="entry name" value="ARGC"/>
    <property type="match status" value="1"/>
</dbReference>
<feature type="chain" id="PRO_0000112500" description="[LysW]-L-2-aminoadipate 6-phosphate reductase">
    <location>
        <begin position="1"/>
        <end position="348"/>
    </location>
</feature>
<feature type="active site" evidence="1">
    <location>
        <position position="151"/>
    </location>
</feature>
<feature type="binding site" evidence="1">
    <location>
        <begin position="14"/>
        <end position="17"/>
    </location>
    <ligand>
        <name>NADP(+)</name>
        <dbReference type="ChEBI" id="CHEBI:58349"/>
    </ligand>
</feature>
<feature type="binding site" evidence="1">
    <location>
        <position position="315"/>
    </location>
    <ligand>
        <name>NADP(+)</name>
        <dbReference type="ChEBI" id="CHEBI:58349"/>
    </ligand>
</feature>